<accession>A7ZXC9</accession>
<dbReference type="EMBL" id="CP000802">
    <property type="protein sequence ID" value="ABV04933.1"/>
    <property type="molecule type" value="Genomic_DNA"/>
</dbReference>
<dbReference type="RefSeq" id="WP_000467098.1">
    <property type="nucleotide sequence ID" value="NC_009800.1"/>
</dbReference>
<dbReference type="SMR" id="A7ZXC9"/>
<dbReference type="KEGG" id="ecx:EcHS_A0548"/>
<dbReference type="HOGENOM" id="CLU_140930_0_0_6"/>
<dbReference type="GO" id="GO:0043590">
    <property type="term" value="C:bacterial nucleoid"/>
    <property type="evidence" value="ECO:0007669"/>
    <property type="project" value="UniProtKB-UniRule"/>
</dbReference>
<dbReference type="GO" id="GO:0005829">
    <property type="term" value="C:cytosol"/>
    <property type="evidence" value="ECO:0007669"/>
    <property type="project" value="TreeGrafter"/>
</dbReference>
<dbReference type="GO" id="GO:0003677">
    <property type="term" value="F:DNA binding"/>
    <property type="evidence" value="ECO:0007669"/>
    <property type="project" value="UniProtKB-UniRule"/>
</dbReference>
<dbReference type="FunFam" id="3.30.1310.10:FF:000001">
    <property type="entry name" value="Nucleoid-associated protein YbaB"/>
    <property type="match status" value="1"/>
</dbReference>
<dbReference type="Gene3D" id="3.30.1310.10">
    <property type="entry name" value="Nucleoid-associated protein YbaB-like domain"/>
    <property type="match status" value="1"/>
</dbReference>
<dbReference type="HAMAP" id="MF_00274">
    <property type="entry name" value="DNA_YbaB_EbfC"/>
    <property type="match status" value="1"/>
</dbReference>
<dbReference type="InterPro" id="IPR036894">
    <property type="entry name" value="YbaB-like_sf"/>
</dbReference>
<dbReference type="InterPro" id="IPR004401">
    <property type="entry name" value="YbaB/EbfC"/>
</dbReference>
<dbReference type="NCBIfam" id="TIGR00103">
    <property type="entry name" value="DNA_YbaB_EbfC"/>
    <property type="match status" value="1"/>
</dbReference>
<dbReference type="PANTHER" id="PTHR33449">
    <property type="entry name" value="NUCLEOID-ASSOCIATED PROTEIN YBAB"/>
    <property type="match status" value="1"/>
</dbReference>
<dbReference type="PANTHER" id="PTHR33449:SF1">
    <property type="entry name" value="NUCLEOID-ASSOCIATED PROTEIN YBAB"/>
    <property type="match status" value="1"/>
</dbReference>
<dbReference type="Pfam" id="PF02575">
    <property type="entry name" value="YbaB_DNA_bd"/>
    <property type="match status" value="1"/>
</dbReference>
<dbReference type="PIRSF" id="PIRSF004555">
    <property type="entry name" value="UCP004555"/>
    <property type="match status" value="1"/>
</dbReference>
<dbReference type="SUPFAM" id="SSF82607">
    <property type="entry name" value="YbaB-like"/>
    <property type="match status" value="1"/>
</dbReference>
<reference key="1">
    <citation type="journal article" date="2008" name="J. Bacteriol.">
        <title>The pangenome structure of Escherichia coli: comparative genomic analysis of E. coli commensal and pathogenic isolates.</title>
        <authorList>
            <person name="Rasko D.A."/>
            <person name="Rosovitz M.J."/>
            <person name="Myers G.S.A."/>
            <person name="Mongodin E.F."/>
            <person name="Fricke W.F."/>
            <person name="Gajer P."/>
            <person name="Crabtree J."/>
            <person name="Sebaihia M."/>
            <person name="Thomson N.R."/>
            <person name="Chaudhuri R."/>
            <person name="Henderson I.R."/>
            <person name="Sperandio V."/>
            <person name="Ravel J."/>
        </authorList>
    </citation>
    <scope>NUCLEOTIDE SEQUENCE [LARGE SCALE GENOMIC DNA]</scope>
    <source>
        <strain>HS</strain>
    </source>
</reference>
<gene>
    <name evidence="1" type="primary">ybaB</name>
    <name type="ordered locus">EcHS_A0548</name>
</gene>
<keyword id="KW-0963">Cytoplasm</keyword>
<keyword id="KW-0238">DNA-binding</keyword>
<feature type="chain" id="PRO_1000059198" description="Nucleoid-associated protein YbaB">
    <location>
        <begin position="1"/>
        <end position="109"/>
    </location>
</feature>
<protein>
    <recommendedName>
        <fullName evidence="1">Nucleoid-associated protein YbaB</fullName>
    </recommendedName>
</protein>
<proteinExistence type="inferred from homology"/>
<name>YBAB_ECOHS</name>
<comment type="function">
    <text evidence="1">Binds to DNA and alters its conformation. May be involved in regulation of gene expression, nucleoid organization and DNA protection.</text>
</comment>
<comment type="subunit">
    <text evidence="1">Homodimer.</text>
</comment>
<comment type="subcellular location">
    <subcellularLocation>
        <location evidence="1">Cytoplasm</location>
        <location evidence="1">Nucleoid</location>
    </subcellularLocation>
</comment>
<comment type="similarity">
    <text evidence="1">Belongs to the YbaB/EbfC family.</text>
</comment>
<organism>
    <name type="scientific">Escherichia coli O9:H4 (strain HS)</name>
    <dbReference type="NCBI Taxonomy" id="331112"/>
    <lineage>
        <taxon>Bacteria</taxon>
        <taxon>Pseudomonadati</taxon>
        <taxon>Pseudomonadota</taxon>
        <taxon>Gammaproteobacteria</taxon>
        <taxon>Enterobacterales</taxon>
        <taxon>Enterobacteriaceae</taxon>
        <taxon>Escherichia</taxon>
    </lineage>
</organism>
<evidence type="ECO:0000255" key="1">
    <source>
        <dbReference type="HAMAP-Rule" id="MF_00274"/>
    </source>
</evidence>
<sequence length="109" mass="12015">MFGKGGLGNLMKQAQQMQEKMQKMQEEIAQLEVTGESGAGLVKVTINGAHNCRRVEIDPSLLEDDKEMLEDLVAAAFNDAARRIEETQKEKMASVSSGMQLPPGFKMPF</sequence>